<name>VATB1_BOVIN</name>
<organism>
    <name type="scientific">Bos taurus</name>
    <name type="common">Bovine</name>
    <dbReference type="NCBI Taxonomy" id="9913"/>
    <lineage>
        <taxon>Eukaryota</taxon>
        <taxon>Metazoa</taxon>
        <taxon>Chordata</taxon>
        <taxon>Craniata</taxon>
        <taxon>Vertebrata</taxon>
        <taxon>Euteleostomi</taxon>
        <taxon>Mammalia</taxon>
        <taxon>Eutheria</taxon>
        <taxon>Laurasiatheria</taxon>
        <taxon>Artiodactyla</taxon>
        <taxon>Ruminantia</taxon>
        <taxon>Pecora</taxon>
        <taxon>Bovidae</taxon>
        <taxon>Bovinae</taxon>
        <taxon>Bos</taxon>
    </lineage>
</organism>
<keyword id="KW-0067">ATP-binding</keyword>
<keyword id="KW-1003">Cell membrane</keyword>
<keyword id="KW-0903">Direct protein sequencing</keyword>
<keyword id="KW-0375">Hydrogen ion transport</keyword>
<keyword id="KW-0406">Ion transport</keyword>
<keyword id="KW-0472">Membrane</keyword>
<keyword id="KW-0547">Nucleotide-binding</keyword>
<keyword id="KW-1185">Reference proteome</keyword>
<keyword id="KW-0813">Transport</keyword>
<proteinExistence type="evidence at protein level"/>
<feature type="chain" id="PRO_0000144623" description="V-type proton ATPase subunit B, kidney isoform">
    <location>
        <begin position="1"/>
        <end position="513"/>
    </location>
</feature>
<feature type="short sequence motif" description="PDZ-binding" evidence="1">
    <location>
        <begin position="510"/>
        <end position="513"/>
    </location>
</feature>
<feature type="binding site" evidence="2">
    <location>
        <position position="394"/>
    </location>
    <ligand>
        <name>ATP</name>
        <dbReference type="ChEBI" id="CHEBI:30616"/>
    </ligand>
</feature>
<evidence type="ECO:0000250" key="1">
    <source>
        <dbReference type="UniProtKB" id="P15313"/>
    </source>
</evidence>
<evidence type="ECO:0000250" key="2">
    <source>
        <dbReference type="UniProtKB" id="P31408"/>
    </source>
</evidence>
<evidence type="ECO:0000250" key="3">
    <source>
        <dbReference type="UniProtKB" id="Q91YH6"/>
    </source>
</evidence>
<evidence type="ECO:0000269" key="4">
    <source>
    </source>
</evidence>
<evidence type="ECO:0000305" key="5"/>
<accession>P31407</accession>
<gene>
    <name type="primary">ATP6V1B1</name>
    <name type="synonym">ATP6B1</name>
</gene>
<dbReference type="EMBL" id="M88691">
    <property type="protein sequence ID" value="AAA30394.1"/>
    <property type="molecule type" value="mRNA"/>
</dbReference>
<dbReference type="PIR" id="C44138">
    <property type="entry name" value="C44138"/>
</dbReference>
<dbReference type="RefSeq" id="NP_788827.1">
    <property type="nucleotide sequence ID" value="NM_176654.2"/>
</dbReference>
<dbReference type="SMR" id="P31407"/>
<dbReference type="CORUM" id="P31407"/>
<dbReference type="FunCoup" id="P31407">
    <property type="interactions" value="309"/>
</dbReference>
<dbReference type="STRING" id="9913.ENSBTAP00000014039"/>
<dbReference type="PaxDb" id="9913-ENSBTAP00000014039"/>
<dbReference type="PeptideAtlas" id="P31407"/>
<dbReference type="GeneID" id="338059"/>
<dbReference type="KEGG" id="bta:338059"/>
<dbReference type="CTD" id="525"/>
<dbReference type="VEuPathDB" id="HostDB:ENSBTAG00000010620"/>
<dbReference type="eggNOG" id="KOG1351">
    <property type="taxonomic scope" value="Eukaryota"/>
</dbReference>
<dbReference type="InParanoid" id="P31407"/>
<dbReference type="OMA" id="YPRNYIR"/>
<dbReference type="OrthoDB" id="1735853at2759"/>
<dbReference type="Reactome" id="R-BTA-1222556">
    <property type="pathway name" value="ROS and RNS production in phagocytes"/>
</dbReference>
<dbReference type="Reactome" id="R-BTA-77387">
    <property type="pathway name" value="Insulin receptor recycling"/>
</dbReference>
<dbReference type="Reactome" id="R-BTA-917977">
    <property type="pathway name" value="Transferrin endocytosis and recycling"/>
</dbReference>
<dbReference type="Reactome" id="R-BTA-9639288">
    <property type="pathway name" value="Amino acids regulate mTORC1"/>
</dbReference>
<dbReference type="Reactome" id="R-BTA-983712">
    <property type="pathway name" value="Ion channel transport"/>
</dbReference>
<dbReference type="Proteomes" id="UP000009136">
    <property type="component" value="Chromosome 11"/>
</dbReference>
<dbReference type="Bgee" id="ENSBTAG00000010620">
    <property type="expression patterns" value="Expressed in adult mammalian kidney and 63 other cell types or tissues"/>
</dbReference>
<dbReference type="GO" id="GO:0016324">
    <property type="term" value="C:apical plasma membrane"/>
    <property type="evidence" value="ECO:0000250"/>
    <property type="project" value="UniProtKB"/>
</dbReference>
<dbReference type="GO" id="GO:0016323">
    <property type="term" value="C:basolateral plasma membrane"/>
    <property type="evidence" value="ECO:0000250"/>
    <property type="project" value="UniProtKB"/>
</dbReference>
<dbReference type="GO" id="GO:0005737">
    <property type="term" value="C:cytoplasm"/>
    <property type="evidence" value="ECO:0000250"/>
    <property type="project" value="UniProtKB"/>
</dbReference>
<dbReference type="GO" id="GO:0016328">
    <property type="term" value="C:lateral plasma membrane"/>
    <property type="evidence" value="ECO:0000250"/>
    <property type="project" value="UniProtKB"/>
</dbReference>
<dbReference type="GO" id="GO:0005902">
    <property type="term" value="C:microvillus"/>
    <property type="evidence" value="ECO:0000250"/>
    <property type="project" value="UniProtKB"/>
</dbReference>
<dbReference type="GO" id="GO:0033180">
    <property type="term" value="C:proton-transporting V-type ATPase, V1 domain"/>
    <property type="evidence" value="ECO:0007669"/>
    <property type="project" value="InterPro"/>
</dbReference>
<dbReference type="GO" id="GO:0016471">
    <property type="term" value="C:vacuolar proton-transporting V-type ATPase complex"/>
    <property type="evidence" value="ECO:0000250"/>
    <property type="project" value="UniProtKB"/>
</dbReference>
<dbReference type="GO" id="GO:0005524">
    <property type="term" value="F:ATP binding"/>
    <property type="evidence" value="ECO:0007669"/>
    <property type="project" value="UniProtKB-KW"/>
</dbReference>
<dbReference type="GO" id="GO:0015078">
    <property type="term" value="F:proton transmembrane transporter activity"/>
    <property type="evidence" value="ECO:0000250"/>
    <property type="project" value="UniProtKB"/>
</dbReference>
<dbReference type="GO" id="GO:0046961">
    <property type="term" value="F:proton-transporting ATPase activity, rotational mechanism"/>
    <property type="evidence" value="ECO:0000318"/>
    <property type="project" value="GO_Central"/>
</dbReference>
<dbReference type="GO" id="GO:0046034">
    <property type="term" value="P:ATP metabolic process"/>
    <property type="evidence" value="ECO:0007669"/>
    <property type="project" value="InterPro"/>
</dbReference>
<dbReference type="GO" id="GO:0042472">
    <property type="term" value="P:inner ear morphogenesis"/>
    <property type="evidence" value="ECO:0000250"/>
    <property type="project" value="UniProtKB"/>
</dbReference>
<dbReference type="GO" id="GO:0001503">
    <property type="term" value="P:ossification"/>
    <property type="evidence" value="ECO:0000250"/>
    <property type="project" value="UniProtKB"/>
</dbReference>
<dbReference type="GO" id="GO:1902600">
    <property type="term" value="P:proton transmembrane transport"/>
    <property type="evidence" value="ECO:0000250"/>
    <property type="project" value="UniProtKB"/>
</dbReference>
<dbReference type="GO" id="GO:0006885">
    <property type="term" value="P:regulation of pH"/>
    <property type="evidence" value="ECO:0000250"/>
    <property type="project" value="UniProtKB"/>
</dbReference>
<dbReference type="GO" id="GO:0007035">
    <property type="term" value="P:vacuolar acidification"/>
    <property type="evidence" value="ECO:0000318"/>
    <property type="project" value="GO_Central"/>
</dbReference>
<dbReference type="GO" id="GO:0070072">
    <property type="term" value="P:vacuolar proton-transporting V-type ATPase complex assembly"/>
    <property type="evidence" value="ECO:0000250"/>
    <property type="project" value="UniProtKB"/>
</dbReference>
<dbReference type="CDD" id="cd18112">
    <property type="entry name" value="ATP-synt_V_A-type_beta_C"/>
    <property type="match status" value="1"/>
</dbReference>
<dbReference type="CDD" id="cd18118">
    <property type="entry name" value="ATP-synt_V_A-type_beta_N"/>
    <property type="match status" value="1"/>
</dbReference>
<dbReference type="CDD" id="cd01135">
    <property type="entry name" value="V_A-ATPase_B"/>
    <property type="match status" value="1"/>
</dbReference>
<dbReference type="FunFam" id="3.40.50.12240:FF:000001">
    <property type="entry name" value="V-type proton ATPase subunit B, brain"/>
    <property type="match status" value="1"/>
</dbReference>
<dbReference type="Gene3D" id="3.40.50.12240">
    <property type="match status" value="1"/>
</dbReference>
<dbReference type="HAMAP" id="MF_00310">
    <property type="entry name" value="ATP_synth_B_arch"/>
    <property type="match status" value="1"/>
</dbReference>
<dbReference type="InterPro" id="IPR055190">
    <property type="entry name" value="ATP-synt_VA_C"/>
</dbReference>
<dbReference type="InterPro" id="IPR020003">
    <property type="entry name" value="ATPase_a/bsu_AS"/>
</dbReference>
<dbReference type="InterPro" id="IPR004100">
    <property type="entry name" value="ATPase_F1/V1/A1_a/bsu_N"/>
</dbReference>
<dbReference type="InterPro" id="IPR000194">
    <property type="entry name" value="ATPase_F1/V1/A1_a/bsu_nucl-bd"/>
</dbReference>
<dbReference type="InterPro" id="IPR005723">
    <property type="entry name" value="ATPase_V1-cplx_bsu"/>
</dbReference>
<dbReference type="InterPro" id="IPR027417">
    <property type="entry name" value="P-loop_NTPase"/>
</dbReference>
<dbReference type="InterPro" id="IPR022879">
    <property type="entry name" value="V-ATPase_su_B/beta"/>
</dbReference>
<dbReference type="NCBIfam" id="NF003235">
    <property type="entry name" value="PRK04196.1"/>
    <property type="match status" value="1"/>
</dbReference>
<dbReference type="NCBIfam" id="TIGR01040">
    <property type="entry name" value="V-ATPase_V1_B"/>
    <property type="match status" value="1"/>
</dbReference>
<dbReference type="PANTHER" id="PTHR43389">
    <property type="entry name" value="V-TYPE PROTON ATPASE SUBUNIT B"/>
    <property type="match status" value="1"/>
</dbReference>
<dbReference type="PANTHER" id="PTHR43389:SF1">
    <property type="entry name" value="V-TYPE PROTON ATPASE SUBUNIT B, KIDNEY ISOFORM"/>
    <property type="match status" value="1"/>
</dbReference>
<dbReference type="Pfam" id="PF00006">
    <property type="entry name" value="ATP-synt_ab"/>
    <property type="match status" value="1"/>
</dbReference>
<dbReference type="Pfam" id="PF02874">
    <property type="entry name" value="ATP-synt_ab_N"/>
    <property type="match status" value="1"/>
</dbReference>
<dbReference type="Pfam" id="PF22919">
    <property type="entry name" value="ATP-synt_VA_C"/>
    <property type="match status" value="1"/>
</dbReference>
<dbReference type="PIRSF" id="PIRSF039114">
    <property type="entry name" value="V-ATPsynth_beta/V-ATPase_B"/>
    <property type="match status" value="1"/>
</dbReference>
<dbReference type="SUPFAM" id="SSF52540">
    <property type="entry name" value="P-loop containing nucleoside triphosphate hydrolases"/>
    <property type="match status" value="1"/>
</dbReference>
<dbReference type="PROSITE" id="PS00152">
    <property type="entry name" value="ATPASE_ALPHA_BETA"/>
    <property type="match status" value="1"/>
</dbReference>
<reference key="1">
    <citation type="journal article" date="1992" name="Proc. Natl. Acad. Sci. U.S.A.">
        <title>Selectively amplified expression of an isoform of the vacuolar H(+)-ATPase 56-kilodalton subunit in renal intercalated cells.</title>
        <authorList>
            <person name="Nelson R.D."/>
            <person name="Guo X.-L."/>
            <person name="Masood K."/>
            <person name="Brown D."/>
            <person name="Kalkbrenner M."/>
            <person name="Gluck S."/>
        </authorList>
    </citation>
    <scope>NUCLEOTIDE SEQUENCE [MRNA]</scope>
    <scope>PROTEIN SEQUENCE OF 504-513</scope>
    <scope>TISSUE SPECIFICITY</scope>
    <source>
        <tissue>Kidney</tissue>
    </source>
</reference>
<comment type="function">
    <text evidence="1 2 3">Non-catalytic subunit of the V1 complex of vacuolar(H+)-ATPase (V-ATPase), a multisubunit enzyme composed of a peripheral complex (V1) that hydrolyzes ATP and a membrane integral complex (V0) that translocates protons (By similarity). V-ATPase is responsible for acidifying and maintaining the pH of intracellular compartments and in some cell types, is targeted to the plasma membrane, where it is responsible for acidifying the extracellular environment (By similarity). Essential for the proper assembly and activity of V-ATPase (By similarity). In renal intercalated cells, mediates secretion of protons (H+) into the urine thereby ensuring correct urinary acidification (By similarity). Required for optimal olfactory function by mediating the acidification of the nasal olfactory epithelium (By similarity).</text>
</comment>
<comment type="subunit">
    <text evidence="1 2">V-ATPase is a heteromultimeric enzyme made up of two complexes: the ATP-hydrolytic V1 complex and the proton translocation V0 complex (By similarity). The V1 complex consists of three catalytic AB heterodimers that form a heterohexamer, three peripheral stalks each consisting of EG heterodimers, one central rotor including subunits D and F, and the regulatory subunits C and H (By similarity). The proton translocation complex V0 consists of the proton transport subunit a, a ring of proteolipid subunits c9c'', rotary subunit d, subunits e and f, and the accessory subunits ATP6AP1/Ac45 and ATP6AP2/PRR (By similarity). Forms a complex with NHERF1 and SCL4A7 (By similarity).</text>
</comment>
<comment type="subcellular location">
    <subcellularLocation>
        <location evidence="1">Apical cell membrane</location>
    </subcellularLocation>
    <subcellularLocation>
        <location evidence="3">Basolateral cell membrane</location>
    </subcellularLocation>
</comment>
<comment type="tissue specificity">
    <text evidence="4">Kidney cortex and medulla.</text>
</comment>
<comment type="domain">
    <text evidence="1">The PDZ-binding motif mediates interactions with NHERF1 and SCL4A7.</text>
</comment>
<comment type="similarity">
    <text evidence="5">Belongs to the ATPase alpha/beta chains family.</text>
</comment>
<sequence length="513" mass="56747">MAAEVDSRPRGLPGGGASLGAAREHVQAVTRNYITHPRITYRTVCSVNGPLVVLDQVKFAQYAEIVNFTLPNGTQRSGQVLEVSGTKAIVQVFEGTSGIDAQKTTCEFTGDILRTPVSEDMLGRVFNGSGKPIDKGPVVMAEDFLDINGQPINPHDRIYPEEMIETGISPIDVMNSIARGQKIPIFSAAGLPHNEIAAQICRQAGLVKKSKAVLDYHDDNFAIVFAAMGVNMETARFFKSDFEQNGTMGNVCLFLNLANDPTIERIITPRLALTTAEFLAYQCEKHVLVILTDMSSYAEALREVSAAREEVPGRRGFPGYMYTDLATIYERAGRVEGRGGSITQIPILTMPNDDITHPIPDLTGFITEGQIYVDRQLHNRQIYPPINVLPSLSRLMKSAIGEGMTRKDHGDVSNQLYACYAIGKDVQAMKAVVGEEALTSEDLLYLEFLQKFEKKFINQGPYEKRSVFESLDLGWKLLRTFPKEMLKRIPQNIIDEFFSREGAPQDTEADTAL</sequence>
<protein>
    <recommendedName>
        <fullName>V-type proton ATPase subunit B, kidney isoform</fullName>
        <shortName>V-ATPase subunit B 1</shortName>
    </recommendedName>
    <alternativeName>
        <fullName>Endomembrane proton pump 58 kDa subunit</fullName>
    </alternativeName>
    <alternativeName>
        <fullName>Vacuolar proton pump subunit B 1</fullName>
    </alternativeName>
</protein>